<protein>
    <recommendedName>
        <fullName evidence="1">DNA ligase</fullName>
        <ecNumber evidence="1">6.5.1.2</ecNumber>
    </recommendedName>
    <alternativeName>
        <fullName evidence="1">Polydeoxyribonucleotide synthase [NAD(+)]</fullName>
    </alternativeName>
</protein>
<feature type="chain" id="PRO_0000380348" description="DNA ligase">
    <location>
        <begin position="1"/>
        <end position="674"/>
    </location>
</feature>
<feature type="domain" description="BRCT" evidence="1">
    <location>
        <begin position="593"/>
        <end position="674"/>
    </location>
</feature>
<feature type="active site" description="N6-AMP-lysine intermediate" evidence="1">
    <location>
        <position position="109"/>
    </location>
</feature>
<feature type="binding site" evidence="1">
    <location>
        <begin position="34"/>
        <end position="38"/>
    </location>
    <ligand>
        <name>NAD(+)</name>
        <dbReference type="ChEBI" id="CHEBI:57540"/>
    </ligand>
</feature>
<feature type="binding site" evidence="1">
    <location>
        <begin position="82"/>
        <end position="83"/>
    </location>
    <ligand>
        <name>NAD(+)</name>
        <dbReference type="ChEBI" id="CHEBI:57540"/>
    </ligand>
</feature>
<feature type="binding site" evidence="1">
    <location>
        <position position="107"/>
    </location>
    <ligand>
        <name>NAD(+)</name>
        <dbReference type="ChEBI" id="CHEBI:57540"/>
    </ligand>
</feature>
<feature type="binding site" evidence="1">
    <location>
        <position position="130"/>
    </location>
    <ligand>
        <name>NAD(+)</name>
        <dbReference type="ChEBI" id="CHEBI:57540"/>
    </ligand>
</feature>
<feature type="binding site" evidence="1">
    <location>
        <position position="170"/>
    </location>
    <ligand>
        <name>NAD(+)</name>
        <dbReference type="ChEBI" id="CHEBI:57540"/>
    </ligand>
</feature>
<feature type="binding site" evidence="1">
    <location>
        <position position="286"/>
    </location>
    <ligand>
        <name>NAD(+)</name>
        <dbReference type="ChEBI" id="CHEBI:57540"/>
    </ligand>
</feature>
<feature type="binding site" evidence="1">
    <location>
        <position position="310"/>
    </location>
    <ligand>
        <name>NAD(+)</name>
        <dbReference type="ChEBI" id="CHEBI:57540"/>
    </ligand>
</feature>
<feature type="binding site" evidence="1">
    <location>
        <position position="404"/>
    </location>
    <ligand>
        <name>Zn(2+)</name>
        <dbReference type="ChEBI" id="CHEBI:29105"/>
    </ligand>
</feature>
<feature type="binding site" evidence="1">
    <location>
        <position position="407"/>
    </location>
    <ligand>
        <name>Zn(2+)</name>
        <dbReference type="ChEBI" id="CHEBI:29105"/>
    </ligand>
</feature>
<feature type="binding site" evidence="1">
    <location>
        <position position="423"/>
    </location>
    <ligand>
        <name>Zn(2+)</name>
        <dbReference type="ChEBI" id="CHEBI:29105"/>
    </ligand>
</feature>
<feature type="binding site" evidence="1">
    <location>
        <position position="429"/>
    </location>
    <ligand>
        <name>Zn(2+)</name>
        <dbReference type="ChEBI" id="CHEBI:29105"/>
    </ligand>
</feature>
<evidence type="ECO:0000255" key="1">
    <source>
        <dbReference type="HAMAP-Rule" id="MF_01588"/>
    </source>
</evidence>
<keyword id="KW-0227">DNA damage</keyword>
<keyword id="KW-0234">DNA repair</keyword>
<keyword id="KW-0235">DNA replication</keyword>
<keyword id="KW-0436">Ligase</keyword>
<keyword id="KW-0460">Magnesium</keyword>
<keyword id="KW-0464">Manganese</keyword>
<keyword id="KW-0479">Metal-binding</keyword>
<keyword id="KW-0520">NAD</keyword>
<keyword id="KW-1185">Reference proteome</keyword>
<keyword id="KW-0862">Zinc</keyword>
<organism>
    <name type="scientific">Corynebacterium aurimucosum (strain ATCC 700975 / DSM 44827 / CIP 107346 / CN-1)</name>
    <name type="common">Corynebacterium nigricans</name>
    <dbReference type="NCBI Taxonomy" id="548476"/>
    <lineage>
        <taxon>Bacteria</taxon>
        <taxon>Bacillati</taxon>
        <taxon>Actinomycetota</taxon>
        <taxon>Actinomycetes</taxon>
        <taxon>Mycobacteriales</taxon>
        <taxon>Corynebacteriaceae</taxon>
        <taxon>Corynebacterium</taxon>
    </lineage>
</organism>
<dbReference type="EC" id="6.5.1.2" evidence="1"/>
<dbReference type="EMBL" id="CP001601">
    <property type="protein sequence ID" value="ACP32699.1"/>
    <property type="molecule type" value="Genomic_DNA"/>
</dbReference>
<dbReference type="RefSeq" id="WP_010186995.1">
    <property type="nucleotide sequence ID" value="NC_012590.1"/>
</dbReference>
<dbReference type="SMR" id="C3PFU5"/>
<dbReference type="STRING" id="548476.cauri_1106"/>
<dbReference type="GeneID" id="31923726"/>
<dbReference type="KEGG" id="car:cauri_1106"/>
<dbReference type="eggNOG" id="COG0272">
    <property type="taxonomic scope" value="Bacteria"/>
</dbReference>
<dbReference type="HOGENOM" id="CLU_007764_2_1_11"/>
<dbReference type="OrthoDB" id="9759736at2"/>
<dbReference type="Proteomes" id="UP000002077">
    <property type="component" value="Chromosome"/>
</dbReference>
<dbReference type="GO" id="GO:0005829">
    <property type="term" value="C:cytosol"/>
    <property type="evidence" value="ECO:0007669"/>
    <property type="project" value="TreeGrafter"/>
</dbReference>
<dbReference type="GO" id="GO:0003911">
    <property type="term" value="F:DNA ligase (NAD+) activity"/>
    <property type="evidence" value="ECO:0007669"/>
    <property type="project" value="UniProtKB-UniRule"/>
</dbReference>
<dbReference type="GO" id="GO:0046872">
    <property type="term" value="F:metal ion binding"/>
    <property type="evidence" value="ECO:0007669"/>
    <property type="project" value="UniProtKB-KW"/>
</dbReference>
<dbReference type="GO" id="GO:0006281">
    <property type="term" value="P:DNA repair"/>
    <property type="evidence" value="ECO:0007669"/>
    <property type="project" value="UniProtKB-KW"/>
</dbReference>
<dbReference type="GO" id="GO:0006260">
    <property type="term" value="P:DNA replication"/>
    <property type="evidence" value="ECO:0007669"/>
    <property type="project" value="UniProtKB-KW"/>
</dbReference>
<dbReference type="CDD" id="cd17748">
    <property type="entry name" value="BRCT_DNA_ligase_like"/>
    <property type="match status" value="1"/>
</dbReference>
<dbReference type="CDD" id="cd00114">
    <property type="entry name" value="LIGANc"/>
    <property type="match status" value="1"/>
</dbReference>
<dbReference type="FunFam" id="1.10.150.20:FF:000006">
    <property type="entry name" value="DNA ligase"/>
    <property type="match status" value="1"/>
</dbReference>
<dbReference type="FunFam" id="2.40.50.140:FF:000012">
    <property type="entry name" value="DNA ligase"/>
    <property type="match status" value="1"/>
</dbReference>
<dbReference type="FunFam" id="3.40.50.10190:FF:000054">
    <property type="entry name" value="DNA ligase"/>
    <property type="match status" value="1"/>
</dbReference>
<dbReference type="Gene3D" id="6.20.10.30">
    <property type="match status" value="1"/>
</dbReference>
<dbReference type="Gene3D" id="1.10.150.20">
    <property type="entry name" value="5' to 3' exonuclease, C-terminal subdomain"/>
    <property type="match status" value="2"/>
</dbReference>
<dbReference type="Gene3D" id="3.40.50.10190">
    <property type="entry name" value="BRCT domain"/>
    <property type="match status" value="1"/>
</dbReference>
<dbReference type="Gene3D" id="3.30.470.30">
    <property type="entry name" value="DNA ligase/mRNA capping enzyme"/>
    <property type="match status" value="1"/>
</dbReference>
<dbReference type="Gene3D" id="1.10.287.610">
    <property type="entry name" value="Helix hairpin bin"/>
    <property type="match status" value="1"/>
</dbReference>
<dbReference type="Gene3D" id="2.40.50.140">
    <property type="entry name" value="Nucleic acid-binding proteins"/>
    <property type="match status" value="1"/>
</dbReference>
<dbReference type="HAMAP" id="MF_01588">
    <property type="entry name" value="DNA_ligase_A"/>
    <property type="match status" value="1"/>
</dbReference>
<dbReference type="InterPro" id="IPR001357">
    <property type="entry name" value="BRCT_dom"/>
</dbReference>
<dbReference type="InterPro" id="IPR036420">
    <property type="entry name" value="BRCT_dom_sf"/>
</dbReference>
<dbReference type="InterPro" id="IPR041663">
    <property type="entry name" value="DisA/LigA_HHH"/>
</dbReference>
<dbReference type="InterPro" id="IPR001679">
    <property type="entry name" value="DNA_ligase"/>
</dbReference>
<dbReference type="InterPro" id="IPR018239">
    <property type="entry name" value="DNA_ligase_AS"/>
</dbReference>
<dbReference type="InterPro" id="IPR033136">
    <property type="entry name" value="DNA_ligase_CS"/>
</dbReference>
<dbReference type="InterPro" id="IPR013839">
    <property type="entry name" value="DNAligase_adenylation"/>
</dbReference>
<dbReference type="InterPro" id="IPR013840">
    <property type="entry name" value="DNAligase_N"/>
</dbReference>
<dbReference type="InterPro" id="IPR012340">
    <property type="entry name" value="NA-bd_OB-fold"/>
</dbReference>
<dbReference type="InterPro" id="IPR004150">
    <property type="entry name" value="NAD_DNA_ligase_OB"/>
</dbReference>
<dbReference type="InterPro" id="IPR010994">
    <property type="entry name" value="RuvA_2-like"/>
</dbReference>
<dbReference type="InterPro" id="IPR004149">
    <property type="entry name" value="Znf_DNAligase_C4"/>
</dbReference>
<dbReference type="NCBIfam" id="TIGR00575">
    <property type="entry name" value="dnlj"/>
    <property type="match status" value="1"/>
</dbReference>
<dbReference type="NCBIfam" id="NF005932">
    <property type="entry name" value="PRK07956.1"/>
    <property type="match status" value="1"/>
</dbReference>
<dbReference type="PANTHER" id="PTHR23389">
    <property type="entry name" value="CHROMOSOME TRANSMISSION FIDELITY FACTOR 18"/>
    <property type="match status" value="1"/>
</dbReference>
<dbReference type="PANTHER" id="PTHR23389:SF9">
    <property type="entry name" value="DNA LIGASE"/>
    <property type="match status" value="1"/>
</dbReference>
<dbReference type="Pfam" id="PF00533">
    <property type="entry name" value="BRCT"/>
    <property type="match status" value="1"/>
</dbReference>
<dbReference type="Pfam" id="PF01653">
    <property type="entry name" value="DNA_ligase_aden"/>
    <property type="match status" value="1"/>
</dbReference>
<dbReference type="Pfam" id="PF03120">
    <property type="entry name" value="DNA_ligase_OB"/>
    <property type="match status" value="1"/>
</dbReference>
<dbReference type="Pfam" id="PF03119">
    <property type="entry name" value="DNA_ligase_ZBD"/>
    <property type="match status" value="1"/>
</dbReference>
<dbReference type="Pfam" id="PF12826">
    <property type="entry name" value="HHH_2"/>
    <property type="match status" value="1"/>
</dbReference>
<dbReference type="PIRSF" id="PIRSF001604">
    <property type="entry name" value="LigA"/>
    <property type="match status" value="1"/>
</dbReference>
<dbReference type="SMART" id="SM00292">
    <property type="entry name" value="BRCT"/>
    <property type="match status" value="1"/>
</dbReference>
<dbReference type="SMART" id="SM00532">
    <property type="entry name" value="LIGANc"/>
    <property type="match status" value="1"/>
</dbReference>
<dbReference type="SUPFAM" id="SSF52113">
    <property type="entry name" value="BRCT domain"/>
    <property type="match status" value="1"/>
</dbReference>
<dbReference type="SUPFAM" id="SSF56091">
    <property type="entry name" value="DNA ligase/mRNA capping enzyme, catalytic domain"/>
    <property type="match status" value="1"/>
</dbReference>
<dbReference type="SUPFAM" id="SSF50249">
    <property type="entry name" value="Nucleic acid-binding proteins"/>
    <property type="match status" value="1"/>
</dbReference>
<dbReference type="SUPFAM" id="SSF47781">
    <property type="entry name" value="RuvA domain 2-like"/>
    <property type="match status" value="1"/>
</dbReference>
<dbReference type="PROSITE" id="PS50172">
    <property type="entry name" value="BRCT"/>
    <property type="match status" value="1"/>
</dbReference>
<dbReference type="PROSITE" id="PS01055">
    <property type="entry name" value="DNA_LIGASE_N1"/>
    <property type="match status" value="1"/>
</dbReference>
<dbReference type="PROSITE" id="PS01056">
    <property type="entry name" value="DNA_LIGASE_N2"/>
    <property type="match status" value="1"/>
</dbReference>
<proteinExistence type="inferred from homology"/>
<accession>C3PFU5</accession>
<name>DNLJ_CORA7</name>
<reference key="1">
    <citation type="journal article" date="2010" name="BMC Genomics">
        <title>Complete genome sequence and lifestyle of black-pigmented Corynebacterium aurimucosum ATCC 700975 (formerly C. nigricans CN-1) isolated from a vaginal swab of a woman with spontaneous abortion.</title>
        <authorList>
            <person name="Trost E."/>
            <person name="Gotker S."/>
            <person name="Schneider J."/>
            <person name="Schneiker-Bekel S."/>
            <person name="Szczepanowski R."/>
            <person name="Tilker A."/>
            <person name="Viehoever P."/>
            <person name="Arnold W."/>
            <person name="Bekel T."/>
            <person name="Blom J."/>
            <person name="Gartemann K.H."/>
            <person name="Linke B."/>
            <person name="Goesmann A."/>
            <person name="Puhler A."/>
            <person name="Shukla S.K."/>
            <person name="Tauch A."/>
        </authorList>
    </citation>
    <scope>NUCLEOTIDE SEQUENCE [LARGE SCALE GENOMIC DNA]</scope>
    <source>
        <strain>ATCC 700975 / DSM 44827 / CIP 107346 / CN-1</strain>
    </source>
</reference>
<sequence length="674" mass="74636">MSDAVDIQREWSELAQEVRKHRELYYNGEPSIPDADFDELFQRLLALEAEHPELQTPDSPTQQVGAAPEGAVDIEHLERLYSLDNVFSAEELQDWLDRTPAEAYLTELKIDGLSIDLVYRDGKLVTAATRGDGRVGEDITANARVIPDIPHELTGTDEYPVPSLVEVRGEVYMRPDEFEEINAARREDGKPTFANPRNAAAGGLRMKDPEDVKKRRLHMVCHGIGARERFQPTSQHDAYKALEAWGFPVSPYTQRVTTAKEVQERVTYWEEHRHDAYFEMDGLVIKVDDLASQRALGATSRAPRWAIAYKYPPEEVTTKLLNIEVGVGRTGRVTPFAIMEPVFVSGSTVSMATLHNQFEVKNKNVLIGDTIIIRKAGEIIPEVLGPVLDKRDGSETEWVFPENCPACGTKLAPQKEGDQDWRCPNTRSCPAQLAARLEYLASRKALDIGELGEKAAADLISSGVLEDEADLFDLDEQALLKSSVYTTQKGALNASGKKLLENLKTARQAEFWRVLVALSIRHVGPIAARALATRFGSMEVLRAASVEELADTDGVGTIIAESFKQWFEVDWHDNIVQKWTAAGVTMEEESSDKPAQTLEGITVVVTGTLENFTRDSAKEAIITRGGKASSSVSKKTNYVVVGENAGSKEQKARDLGLTILDEEGFTRLLETGEA</sequence>
<gene>
    <name evidence="1" type="primary">ligA</name>
    <name type="ordered locus">cauri_1106</name>
</gene>
<comment type="function">
    <text evidence="1">DNA ligase that catalyzes the formation of phosphodiester linkages between 5'-phosphoryl and 3'-hydroxyl groups in double-stranded DNA using NAD as a coenzyme and as the energy source for the reaction. It is essential for DNA replication and repair of damaged DNA.</text>
</comment>
<comment type="catalytic activity">
    <reaction evidence="1">
        <text>NAD(+) + (deoxyribonucleotide)n-3'-hydroxyl + 5'-phospho-(deoxyribonucleotide)m = (deoxyribonucleotide)n+m + AMP + beta-nicotinamide D-nucleotide.</text>
        <dbReference type="EC" id="6.5.1.2"/>
    </reaction>
</comment>
<comment type="cofactor">
    <cofactor evidence="1">
        <name>Mg(2+)</name>
        <dbReference type="ChEBI" id="CHEBI:18420"/>
    </cofactor>
    <cofactor evidence="1">
        <name>Mn(2+)</name>
        <dbReference type="ChEBI" id="CHEBI:29035"/>
    </cofactor>
</comment>
<comment type="similarity">
    <text evidence="1">Belongs to the NAD-dependent DNA ligase family. LigA subfamily.</text>
</comment>